<organism>
    <name type="scientific">Streptococcus pneumoniae (strain Taiwan19F-14)</name>
    <dbReference type="NCBI Taxonomy" id="487213"/>
    <lineage>
        <taxon>Bacteria</taxon>
        <taxon>Bacillati</taxon>
        <taxon>Bacillota</taxon>
        <taxon>Bacilli</taxon>
        <taxon>Lactobacillales</taxon>
        <taxon>Streptococcaceae</taxon>
        <taxon>Streptococcus</taxon>
    </lineage>
</organism>
<comment type="function">
    <text evidence="1">Endonuclease that specifically degrades the RNA of RNA-DNA hybrids.</text>
</comment>
<comment type="catalytic activity">
    <reaction evidence="1">
        <text>Endonucleolytic cleavage to 5'-phosphomonoester.</text>
        <dbReference type="EC" id="3.1.26.4"/>
    </reaction>
</comment>
<comment type="cofactor">
    <cofactor evidence="1">
        <name>Mn(2+)</name>
        <dbReference type="ChEBI" id="CHEBI:29035"/>
    </cofactor>
    <cofactor evidence="1">
        <name>Mg(2+)</name>
        <dbReference type="ChEBI" id="CHEBI:18420"/>
    </cofactor>
    <text evidence="1">Manganese or magnesium. Binds 1 divalent metal ion per monomer in the absence of substrate. May bind a second metal ion after substrate binding.</text>
</comment>
<comment type="subcellular location">
    <subcellularLocation>
        <location evidence="1">Cytoplasm</location>
    </subcellularLocation>
</comment>
<comment type="similarity">
    <text evidence="1">Belongs to the RNase HII family. RnhC subfamily.</text>
</comment>
<gene>
    <name evidence="1" type="primary">rnhC</name>
    <name type="ordered locus">SPT_0441</name>
</gene>
<accession>C1CPR4</accession>
<keyword id="KW-0963">Cytoplasm</keyword>
<keyword id="KW-0255">Endonuclease</keyword>
<keyword id="KW-0378">Hydrolase</keyword>
<keyword id="KW-0460">Magnesium</keyword>
<keyword id="KW-0479">Metal-binding</keyword>
<keyword id="KW-0540">Nuclease</keyword>
<protein>
    <recommendedName>
        <fullName evidence="1">Ribonuclease HIII</fullName>
        <shortName evidence="1">RNase HIII</shortName>
        <ecNumber evidence="1">3.1.26.4</ecNumber>
    </recommendedName>
</protein>
<reference key="1">
    <citation type="journal article" date="2010" name="Genome Biol.">
        <title>Structure and dynamics of the pan-genome of Streptococcus pneumoniae and closely related species.</title>
        <authorList>
            <person name="Donati C."/>
            <person name="Hiller N.L."/>
            <person name="Tettelin H."/>
            <person name="Muzzi A."/>
            <person name="Croucher N.J."/>
            <person name="Angiuoli S.V."/>
            <person name="Oggioni M."/>
            <person name="Dunning Hotopp J.C."/>
            <person name="Hu F.Z."/>
            <person name="Riley D.R."/>
            <person name="Covacci A."/>
            <person name="Mitchell T.J."/>
            <person name="Bentley S.D."/>
            <person name="Kilian M."/>
            <person name="Ehrlich G.D."/>
            <person name="Rappuoli R."/>
            <person name="Moxon E.R."/>
            <person name="Masignani V."/>
        </authorList>
    </citation>
    <scope>NUCLEOTIDE SEQUENCE [LARGE SCALE GENOMIC DNA]</scope>
    <source>
        <strain>Taiwan19F-14</strain>
    </source>
</reference>
<dbReference type="EC" id="3.1.26.4" evidence="1"/>
<dbReference type="EMBL" id="CP000921">
    <property type="protein sequence ID" value="ACO23076.1"/>
    <property type="molecule type" value="Genomic_DNA"/>
</dbReference>
<dbReference type="RefSeq" id="WP_000146863.1">
    <property type="nucleotide sequence ID" value="NC_012469.1"/>
</dbReference>
<dbReference type="SMR" id="C1CPR4"/>
<dbReference type="KEGG" id="snt:SPT_0441"/>
<dbReference type="HOGENOM" id="CLU_059546_1_0_9"/>
<dbReference type="GO" id="GO:0005737">
    <property type="term" value="C:cytoplasm"/>
    <property type="evidence" value="ECO:0007669"/>
    <property type="project" value="UniProtKB-SubCell"/>
</dbReference>
<dbReference type="GO" id="GO:0032299">
    <property type="term" value="C:ribonuclease H2 complex"/>
    <property type="evidence" value="ECO:0007669"/>
    <property type="project" value="TreeGrafter"/>
</dbReference>
<dbReference type="GO" id="GO:0000287">
    <property type="term" value="F:magnesium ion binding"/>
    <property type="evidence" value="ECO:0007669"/>
    <property type="project" value="UniProtKB-UniRule"/>
</dbReference>
<dbReference type="GO" id="GO:0003723">
    <property type="term" value="F:RNA binding"/>
    <property type="evidence" value="ECO:0007669"/>
    <property type="project" value="InterPro"/>
</dbReference>
<dbReference type="GO" id="GO:0004523">
    <property type="term" value="F:RNA-DNA hybrid ribonuclease activity"/>
    <property type="evidence" value="ECO:0007669"/>
    <property type="project" value="UniProtKB-UniRule"/>
</dbReference>
<dbReference type="GO" id="GO:0043137">
    <property type="term" value="P:DNA replication, removal of RNA primer"/>
    <property type="evidence" value="ECO:0007669"/>
    <property type="project" value="TreeGrafter"/>
</dbReference>
<dbReference type="GO" id="GO:0006298">
    <property type="term" value="P:mismatch repair"/>
    <property type="evidence" value="ECO:0007669"/>
    <property type="project" value="TreeGrafter"/>
</dbReference>
<dbReference type="CDD" id="cd06590">
    <property type="entry name" value="RNase_HII_bacteria_HIII_like"/>
    <property type="match status" value="1"/>
</dbReference>
<dbReference type="CDD" id="cd14796">
    <property type="entry name" value="RNAse_HIII_N"/>
    <property type="match status" value="1"/>
</dbReference>
<dbReference type="FunFam" id="3.30.420.10:FF:000047">
    <property type="entry name" value="Ribonuclease HIII"/>
    <property type="match status" value="1"/>
</dbReference>
<dbReference type="Gene3D" id="3.30.420.10">
    <property type="entry name" value="Ribonuclease H-like superfamily/Ribonuclease H"/>
    <property type="match status" value="1"/>
</dbReference>
<dbReference type="Gene3D" id="3.30.310.10">
    <property type="entry name" value="TATA-Binding Protein"/>
    <property type="match status" value="1"/>
</dbReference>
<dbReference type="HAMAP" id="MF_00053">
    <property type="entry name" value="RNase_HIII"/>
    <property type="match status" value="1"/>
</dbReference>
<dbReference type="InterPro" id="IPR001352">
    <property type="entry name" value="RNase_HII/HIII"/>
</dbReference>
<dbReference type="InterPro" id="IPR024567">
    <property type="entry name" value="RNase_HII/HIII_dom"/>
</dbReference>
<dbReference type="InterPro" id="IPR004641">
    <property type="entry name" value="RNase_HIII"/>
</dbReference>
<dbReference type="InterPro" id="IPR024568">
    <property type="entry name" value="RNase_HIII_N"/>
</dbReference>
<dbReference type="InterPro" id="IPR012337">
    <property type="entry name" value="RNaseH-like_sf"/>
</dbReference>
<dbReference type="InterPro" id="IPR036397">
    <property type="entry name" value="RNaseH_sf"/>
</dbReference>
<dbReference type="InterPro" id="IPR012295">
    <property type="entry name" value="TBP_dom_sf"/>
</dbReference>
<dbReference type="NCBIfam" id="TIGR00716">
    <property type="entry name" value="rnhC"/>
    <property type="match status" value="1"/>
</dbReference>
<dbReference type="PANTHER" id="PTHR10954:SF23">
    <property type="entry name" value="RIBONUCLEASE"/>
    <property type="match status" value="1"/>
</dbReference>
<dbReference type="PANTHER" id="PTHR10954">
    <property type="entry name" value="RIBONUCLEASE H2 SUBUNIT A"/>
    <property type="match status" value="1"/>
</dbReference>
<dbReference type="Pfam" id="PF11858">
    <property type="entry name" value="DUF3378"/>
    <property type="match status" value="1"/>
</dbReference>
<dbReference type="Pfam" id="PF01351">
    <property type="entry name" value="RNase_HII"/>
    <property type="match status" value="1"/>
</dbReference>
<dbReference type="PIRSF" id="PIRSF037748">
    <property type="entry name" value="RnhC"/>
    <property type="match status" value="1"/>
</dbReference>
<dbReference type="SUPFAM" id="SSF53098">
    <property type="entry name" value="Ribonuclease H-like"/>
    <property type="match status" value="1"/>
</dbReference>
<dbReference type="PROSITE" id="PS51975">
    <property type="entry name" value="RNASE_H_2"/>
    <property type="match status" value="1"/>
</dbReference>
<proteinExistence type="inferred from homology"/>
<sequence>MASITLTPSEKDIQAFLEHYQTSLAPSKNPYIRYFLKLPQATVSIYTSGKILLQGEGAEKYASFFGYQAVEQTSGQNLPLIGTDEVGNGSYFGGLAVVAAFVTPDQHDFLRKLGVGDSKTLTDQKIRQIAPILKEKIQHQALLLSPSKYNEVIGNRYNAVSVKVALHNQAIYLLLQKGVQPEKIVIDAFTSAKNYDKYLAQETNRFSNPISLEEKAEGKYLAVAVSSVIARDLFLENLENLGRELGYQLPSGAGTASDKVASQILQAYGMQGLNFCAKLHFKNTEKAKKRLER</sequence>
<feature type="chain" id="PRO_1000194459" description="Ribonuclease HIII">
    <location>
        <begin position="1"/>
        <end position="293"/>
    </location>
</feature>
<feature type="domain" description="RNase H type-2" evidence="2">
    <location>
        <begin position="78"/>
        <end position="293"/>
    </location>
</feature>
<feature type="binding site" evidence="1">
    <location>
        <position position="84"/>
    </location>
    <ligand>
        <name>a divalent metal cation</name>
        <dbReference type="ChEBI" id="CHEBI:60240"/>
    </ligand>
</feature>
<feature type="binding site" evidence="1">
    <location>
        <position position="85"/>
    </location>
    <ligand>
        <name>a divalent metal cation</name>
        <dbReference type="ChEBI" id="CHEBI:60240"/>
    </ligand>
</feature>
<feature type="binding site" evidence="1">
    <location>
        <position position="187"/>
    </location>
    <ligand>
        <name>a divalent metal cation</name>
        <dbReference type="ChEBI" id="CHEBI:60240"/>
    </ligand>
</feature>
<evidence type="ECO:0000255" key="1">
    <source>
        <dbReference type="HAMAP-Rule" id="MF_00053"/>
    </source>
</evidence>
<evidence type="ECO:0000255" key="2">
    <source>
        <dbReference type="PROSITE-ProRule" id="PRU01319"/>
    </source>
</evidence>
<name>RNH3_STRZT</name>